<reference key="1">
    <citation type="journal article" date="2000" name="Nature">
        <title>Sequence and analysis of chromosome 3 of the plant Arabidopsis thaliana.</title>
        <authorList>
            <person name="Salanoubat M."/>
            <person name="Lemcke K."/>
            <person name="Rieger M."/>
            <person name="Ansorge W."/>
            <person name="Unseld M."/>
            <person name="Fartmann B."/>
            <person name="Valle G."/>
            <person name="Bloecker H."/>
            <person name="Perez-Alonso M."/>
            <person name="Obermaier B."/>
            <person name="Delseny M."/>
            <person name="Boutry M."/>
            <person name="Grivell L.A."/>
            <person name="Mache R."/>
            <person name="Puigdomenech P."/>
            <person name="De Simone V."/>
            <person name="Choisne N."/>
            <person name="Artiguenave F."/>
            <person name="Robert C."/>
            <person name="Brottier P."/>
            <person name="Wincker P."/>
            <person name="Cattolico L."/>
            <person name="Weissenbach J."/>
            <person name="Saurin W."/>
            <person name="Quetier F."/>
            <person name="Schaefer M."/>
            <person name="Mueller-Auer S."/>
            <person name="Gabel C."/>
            <person name="Fuchs M."/>
            <person name="Benes V."/>
            <person name="Wurmbach E."/>
            <person name="Drzonek H."/>
            <person name="Erfle H."/>
            <person name="Jordan N."/>
            <person name="Bangert S."/>
            <person name="Wiedelmann R."/>
            <person name="Kranz H."/>
            <person name="Voss H."/>
            <person name="Holland R."/>
            <person name="Brandt P."/>
            <person name="Nyakatura G."/>
            <person name="Vezzi A."/>
            <person name="D'Angelo M."/>
            <person name="Pallavicini A."/>
            <person name="Toppo S."/>
            <person name="Simionati B."/>
            <person name="Conrad A."/>
            <person name="Hornischer K."/>
            <person name="Kauer G."/>
            <person name="Loehnert T.-H."/>
            <person name="Nordsiek G."/>
            <person name="Reichelt J."/>
            <person name="Scharfe M."/>
            <person name="Schoen O."/>
            <person name="Bargues M."/>
            <person name="Terol J."/>
            <person name="Climent J."/>
            <person name="Navarro P."/>
            <person name="Collado C."/>
            <person name="Perez-Perez A."/>
            <person name="Ottenwaelder B."/>
            <person name="Duchemin D."/>
            <person name="Cooke R."/>
            <person name="Laudie M."/>
            <person name="Berger-Llauro C."/>
            <person name="Purnelle B."/>
            <person name="Masuy D."/>
            <person name="de Haan M."/>
            <person name="Maarse A.C."/>
            <person name="Alcaraz J.-P."/>
            <person name="Cottet A."/>
            <person name="Casacuberta E."/>
            <person name="Monfort A."/>
            <person name="Argiriou A."/>
            <person name="Flores M."/>
            <person name="Liguori R."/>
            <person name="Vitale D."/>
            <person name="Mannhaupt G."/>
            <person name="Haase D."/>
            <person name="Schoof H."/>
            <person name="Rudd S."/>
            <person name="Zaccaria P."/>
            <person name="Mewes H.-W."/>
            <person name="Mayer K.F.X."/>
            <person name="Kaul S."/>
            <person name="Town C.D."/>
            <person name="Koo H.L."/>
            <person name="Tallon L.J."/>
            <person name="Jenkins J."/>
            <person name="Rooney T."/>
            <person name="Rizzo M."/>
            <person name="Walts A."/>
            <person name="Utterback T."/>
            <person name="Fujii C.Y."/>
            <person name="Shea T.P."/>
            <person name="Creasy T.H."/>
            <person name="Haas B."/>
            <person name="Maiti R."/>
            <person name="Wu D."/>
            <person name="Peterson J."/>
            <person name="Van Aken S."/>
            <person name="Pai G."/>
            <person name="Militscher J."/>
            <person name="Sellers P."/>
            <person name="Gill J.E."/>
            <person name="Feldblyum T.V."/>
            <person name="Preuss D."/>
            <person name="Lin X."/>
            <person name="Nierman W.C."/>
            <person name="Salzberg S.L."/>
            <person name="White O."/>
            <person name="Venter J.C."/>
            <person name="Fraser C.M."/>
            <person name="Kaneko T."/>
            <person name="Nakamura Y."/>
            <person name="Sato S."/>
            <person name="Kato T."/>
            <person name="Asamizu E."/>
            <person name="Sasamoto S."/>
            <person name="Kimura T."/>
            <person name="Idesawa K."/>
            <person name="Kawashima K."/>
            <person name="Kishida Y."/>
            <person name="Kiyokawa C."/>
            <person name="Kohara M."/>
            <person name="Matsumoto M."/>
            <person name="Matsuno A."/>
            <person name="Muraki A."/>
            <person name="Nakayama S."/>
            <person name="Nakazaki N."/>
            <person name="Shinpo S."/>
            <person name="Takeuchi C."/>
            <person name="Wada T."/>
            <person name="Watanabe A."/>
            <person name="Yamada M."/>
            <person name="Yasuda M."/>
            <person name="Tabata S."/>
        </authorList>
    </citation>
    <scope>NUCLEOTIDE SEQUENCE [LARGE SCALE GENOMIC DNA]</scope>
    <source>
        <strain>cv. Columbia</strain>
    </source>
</reference>
<reference key="2">
    <citation type="journal article" date="2017" name="Plant J.">
        <title>Araport11: a complete reannotation of the Arabidopsis thaliana reference genome.</title>
        <authorList>
            <person name="Cheng C.Y."/>
            <person name="Krishnakumar V."/>
            <person name="Chan A.P."/>
            <person name="Thibaud-Nissen F."/>
            <person name="Schobel S."/>
            <person name="Town C.D."/>
        </authorList>
    </citation>
    <scope>GENOME REANNOTATION</scope>
    <source>
        <strain>cv. Columbia</strain>
    </source>
</reference>
<reference key="3">
    <citation type="journal article" date="2002" name="Science">
        <title>Functional annotation of a full-length Arabidopsis cDNA collection.</title>
        <authorList>
            <person name="Seki M."/>
            <person name="Narusaka M."/>
            <person name="Kamiya A."/>
            <person name="Ishida J."/>
            <person name="Satou M."/>
            <person name="Sakurai T."/>
            <person name="Nakajima M."/>
            <person name="Enju A."/>
            <person name="Akiyama K."/>
            <person name="Oono Y."/>
            <person name="Muramatsu M."/>
            <person name="Hayashizaki Y."/>
            <person name="Kawai J."/>
            <person name="Carninci P."/>
            <person name="Itoh M."/>
            <person name="Ishii Y."/>
            <person name="Arakawa T."/>
            <person name="Shibata K."/>
            <person name="Shinagawa A."/>
            <person name="Shinozaki K."/>
        </authorList>
    </citation>
    <scope>NUCLEOTIDE SEQUENCE [LARGE SCALE MRNA] (ISOFORM 2)</scope>
    <source>
        <strain>cv. Columbia</strain>
    </source>
</reference>
<reference key="4">
    <citation type="journal article" date="2003" name="Science">
        <title>Empirical analysis of transcriptional activity in the Arabidopsis genome.</title>
        <authorList>
            <person name="Yamada K."/>
            <person name="Lim J."/>
            <person name="Dale J.M."/>
            <person name="Chen H."/>
            <person name="Shinn P."/>
            <person name="Palm C.J."/>
            <person name="Southwick A.M."/>
            <person name="Wu H.C."/>
            <person name="Kim C.J."/>
            <person name="Nguyen M."/>
            <person name="Pham P.K."/>
            <person name="Cheuk R.F."/>
            <person name="Karlin-Newmann G."/>
            <person name="Liu S.X."/>
            <person name="Lam B."/>
            <person name="Sakano H."/>
            <person name="Wu T."/>
            <person name="Yu G."/>
            <person name="Miranda M."/>
            <person name="Quach H.L."/>
            <person name="Tripp M."/>
            <person name="Chang C.H."/>
            <person name="Lee J.M."/>
            <person name="Toriumi M.J."/>
            <person name="Chan M.M."/>
            <person name="Tang C.C."/>
            <person name="Onodera C.S."/>
            <person name="Deng J.M."/>
            <person name="Akiyama K."/>
            <person name="Ansari Y."/>
            <person name="Arakawa T."/>
            <person name="Banh J."/>
            <person name="Banno F."/>
            <person name="Bowser L."/>
            <person name="Brooks S.Y."/>
            <person name="Carninci P."/>
            <person name="Chao Q."/>
            <person name="Choy N."/>
            <person name="Enju A."/>
            <person name="Goldsmith A.D."/>
            <person name="Gurjal M."/>
            <person name="Hansen N.F."/>
            <person name="Hayashizaki Y."/>
            <person name="Johnson-Hopson C."/>
            <person name="Hsuan V.W."/>
            <person name="Iida K."/>
            <person name="Karnes M."/>
            <person name="Khan S."/>
            <person name="Koesema E."/>
            <person name="Ishida J."/>
            <person name="Jiang P.X."/>
            <person name="Jones T."/>
            <person name="Kawai J."/>
            <person name="Kamiya A."/>
            <person name="Meyers C."/>
            <person name="Nakajima M."/>
            <person name="Narusaka M."/>
            <person name="Seki M."/>
            <person name="Sakurai T."/>
            <person name="Satou M."/>
            <person name="Tamse R."/>
            <person name="Vaysberg M."/>
            <person name="Wallender E.K."/>
            <person name="Wong C."/>
            <person name="Yamamura Y."/>
            <person name="Yuan S."/>
            <person name="Shinozaki K."/>
            <person name="Davis R.W."/>
            <person name="Theologis A."/>
            <person name="Ecker J.R."/>
        </authorList>
    </citation>
    <scope>NUCLEOTIDE SEQUENCE [LARGE SCALE MRNA] (ISOFORM 2)</scope>
    <source>
        <strain>cv. Columbia</strain>
    </source>
</reference>
<reference key="5">
    <citation type="journal article" date="2001" name="Genes Dev.">
        <title>A conserved MYB transcription factor involved in phosphate starvation signaling both in vascular plants and in unicellular algae.</title>
        <authorList>
            <person name="Rubio V."/>
            <person name="Linhares F."/>
            <person name="Solano R."/>
            <person name="Martin A.C."/>
            <person name="Iglesias J."/>
            <person name="Leyva A."/>
            <person name="Paz-Ares J."/>
        </authorList>
    </citation>
    <scope>GENE FAMILY</scope>
</reference>
<name>PHLD_ARATH</name>
<protein>
    <recommendedName>
        <fullName evidence="3">Myb family transcription factor PHL13</fullName>
    </recommendedName>
    <alternativeName>
        <fullName evidence="3">Protein PHR1-LIKE 13</fullName>
    </alternativeName>
</protein>
<dbReference type="EMBL" id="AC022287">
    <property type="protein sequence ID" value="AAF63776.1"/>
    <property type="status" value="ALT_SEQ"/>
    <property type="molecule type" value="Genomic_DNA"/>
</dbReference>
<dbReference type="EMBL" id="CP002686">
    <property type="protein sequence ID" value="AEE74083.1"/>
    <property type="molecule type" value="Genomic_DNA"/>
</dbReference>
<dbReference type="EMBL" id="CP002686">
    <property type="protein sequence ID" value="AEE74084.1"/>
    <property type="molecule type" value="Genomic_DNA"/>
</dbReference>
<dbReference type="EMBL" id="CP002686">
    <property type="protein sequence ID" value="ANM64795.1"/>
    <property type="molecule type" value="Genomic_DNA"/>
</dbReference>
<dbReference type="EMBL" id="AK118630">
    <property type="protein sequence ID" value="BAC43227.1"/>
    <property type="molecule type" value="mRNA"/>
</dbReference>
<dbReference type="EMBL" id="BT005352">
    <property type="protein sequence ID" value="AAO63416.1"/>
    <property type="molecule type" value="mRNA"/>
</dbReference>
<dbReference type="RefSeq" id="NP_001189806.1">
    <molecule id="F4J3P7-2"/>
    <property type="nucleotide sequence ID" value="NM_001202877.2"/>
</dbReference>
<dbReference type="RefSeq" id="NP_001319469.1">
    <molecule id="F4J3P7-1"/>
    <property type="nucleotide sequence ID" value="NM_001337525.1"/>
</dbReference>
<dbReference type="RefSeq" id="NP_001326800.1">
    <molecule id="F4J3P7-2"/>
    <property type="nucleotide sequence ID" value="NM_001337527.1"/>
</dbReference>
<dbReference type="SMR" id="F4J3P7"/>
<dbReference type="FunCoup" id="F4J3P7">
    <property type="interactions" value="452"/>
</dbReference>
<dbReference type="IntAct" id="F4J3P7">
    <property type="interactions" value="1"/>
</dbReference>
<dbReference type="STRING" id="3702.F4J3P7"/>
<dbReference type="PaxDb" id="3702-AT3G04450.1"/>
<dbReference type="ProteomicsDB" id="236348">
    <molecule id="F4J3P7-1"/>
</dbReference>
<dbReference type="EnsemblPlants" id="AT3G04450.1">
    <molecule id="F4J3P7-1"/>
    <property type="protein sequence ID" value="AT3G04450.1"/>
    <property type="gene ID" value="AT3G04450"/>
</dbReference>
<dbReference type="EnsemblPlants" id="AT3G04450.2">
    <molecule id="F4J3P7-2"/>
    <property type="protein sequence ID" value="AT3G04450.2"/>
    <property type="gene ID" value="AT3G04450"/>
</dbReference>
<dbReference type="EnsemblPlants" id="AT3G04450.4">
    <molecule id="F4J3P7-2"/>
    <property type="protein sequence ID" value="AT3G04450.4"/>
    <property type="gene ID" value="AT3G04450"/>
</dbReference>
<dbReference type="GeneID" id="819601"/>
<dbReference type="Gramene" id="AT3G04450.1">
    <molecule id="F4J3P7-1"/>
    <property type="protein sequence ID" value="AT3G04450.1"/>
    <property type="gene ID" value="AT3G04450"/>
</dbReference>
<dbReference type="Gramene" id="AT3G04450.2">
    <molecule id="F4J3P7-2"/>
    <property type="protein sequence ID" value="AT3G04450.2"/>
    <property type="gene ID" value="AT3G04450"/>
</dbReference>
<dbReference type="Gramene" id="AT3G04450.4">
    <molecule id="F4J3P7-2"/>
    <property type="protein sequence ID" value="AT3G04450.4"/>
    <property type="gene ID" value="AT3G04450"/>
</dbReference>
<dbReference type="KEGG" id="ath:AT3G04450"/>
<dbReference type="Araport" id="AT3G04450"/>
<dbReference type="TAIR" id="AT3G04450"/>
<dbReference type="eggNOG" id="ENOG502RQ9X">
    <property type="taxonomic scope" value="Eukaryota"/>
</dbReference>
<dbReference type="InParanoid" id="F4J3P7"/>
<dbReference type="OMA" id="QEQRDMS"/>
<dbReference type="OrthoDB" id="551907at2759"/>
<dbReference type="PRO" id="PR:F4J3P7"/>
<dbReference type="Proteomes" id="UP000006548">
    <property type="component" value="Chromosome 3"/>
</dbReference>
<dbReference type="ExpressionAtlas" id="F4J3P7">
    <property type="expression patterns" value="baseline and differential"/>
</dbReference>
<dbReference type="GO" id="GO:0005634">
    <property type="term" value="C:nucleus"/>
    <property type="evidence" value="ECO:0007669"/>
    <property type="project" value="UniProtKB-SubCell"/>
</dbReference>
<dbReference type="GO" id="GO:0003677">
    <property type="term" value="F:DNA binding"/>
    <property type="evidence" value="ECO:0007669"/>
    <property type="project" value="UniProtKB-KW"/>
</dbReference>
<dbReference type="GO" id="GO:0003700">
    <property type="term" value="F:DNA-binding transcription factor activity"/>
    <property type="evidence" value="ECO:0000250"/>
    <property type="project" value="TAIR"/>
</dbReference>
<dbReference type="GO" id="GO:0006355">
    <property type="term" value="P:regulation of DNA-templated transcription"/>
    <property type="evidence" value="ECO:0000304"/>
    <property type="project" value="TAIR"/>
</dbReference>
<dbReference type="FunFam" id="1.10.10.60:FF:000002">
    <property type="entry name" value="Myb family transcription factor"/>
    <property type="match status" value="1"/>
</dbReference>
<dbReference type="Gene3D" id="1.10.10.60">
    <property type="entry name" value="Homeodomain-like"/>
    <property type="match status" value="1"/>
</dbReference>
<dbReference type="InterPro" id="IPR009057">
    <property type="entry name" value="Homeodomain-like_sf"/>
</dbReference>
<dbReference type="InterPro" id="IPR025756">
    <property type="entry name" value="Myb_CC_LHEQLE"/>
</dbReference>
<dbReference type="InterPro" id="IPR017930">
    <property type="entry name" value="Myb_dom"/>
</dbReference>
<dbReference type="InterPro" id="IPR006447">
    <property type="entry name" value="Myb_dom_plants"/>
</dbReference>
<dbReference type="InterPro" id="IPR046955">
    <property type="entry name" value="PHR1-like"/>
</dbReference>
<dbReference type="InterPro" id="IPR001005">
    <property type="entry name" value="SANT/Myb"/>
</dbReference>
<dbReference type="NCBIfam" id="TIGR01557">
    <property type="entry name" value="myb_SHAQKYF"/>
    <property type="match status" value="1"/>
</dbReference>
<dbReference type="PANTHER" id="PTHR31499:SF80">
    <property type="entry name" value="HTH MYB-TYPE DOMAIN-CONTAINING PROTEIN"/>
    <property type="match status" value="1"/>
</dbReference>
<dbReference type="PANTHER" id="PTHR31499">
    <property type="entry name" value="MYB FAMILY TRANSCRIPTION FACTOR PHL11"/>
    <property type="match status" value="1"/>
</dbReference>
<dbReference type="Pfam" id="PF14379">
    <property type="entry name" value="Myb_CC_LHEQLE"/>
    <property type="match status" value="1"/>
</dbReference>
<dbReference type="Pfam" id="PF00249">
    <property type="entry name" value="Myb_DNA-binding"/>
    <property type="match status" value="1"/>
</dbReference>
<dbReference type="SUPFAM" id="SSF46689">
    <property type="entry name" value="Homeodomain-like"/>
    <property type="match status" value="1"/>
</dbReference>
<dbReference type="PROSITE" id="PS51294">
    <property type="entry name" value="HTH_MYB"/>
    <property type="match status" value="1"/>
</dbReference>
<accession>F4J3P7</accession>
<accession>Q8GWU5</accession>
<accession>Q9M842</accession>
<evidence type="ECO:0000255" key="1">
    <source>
        <dbReference type="PROSITE-ProRule" id="PRU00625"/>
    </source>
</evidence>
<evidence type="ECO:0000256" key="2">
    <source>
        <dbReference type="SAM" id="MobiDB-lite"/>
    </source>
</evidence>
<evidence type="ECO:0000305" key="3"/>
<evidence type="ECO:0000312" key="4">
    <source>
        <dbReference type="Araport" id="AT3G04450"/>
    </source>
</evidence>
<evidence type="ECO:0000312" key="5">
    <source>
        <dbReference type="EMBL" id="BAC43227.1"/>
    </source>
</evidence>
<evidence type="ECO:0000312" key="6">
    <source>
        <dbReference type="Proteomes" id="UP000006548"/>
    </source>
</evidence>
<comment type="subcellular location">
    <subcellularLocation>
        <location evidence="1">Nucleus</location>
    </subcellularLocation>
</comment>
<comment type="alternative products">
    <event type="alternative splicing"/>
    <isoform>
        <id>F4J3P7-1</id>
        <name>1</name>
        <sequence type="displayed"/>
    </isoform>
    <isoform>
        <id>F4J3P7-2</id>
        <name>2</name>
        <sequence type="described" ref="VSP_058440"/>
    </isoform>
</comment>
<comment type="similarity">
    <text evidence="3">Belongs to the MYB-CC family.</text>
</comment>
<comment type="sequence caution" evidence="3">
    <conflict type="erroneous gene model prediction">
        <sequence resource="EMBL-CDS" id="AAF63776"/>
    </conflict>
</comment>
<sequence>MTLASDFGFPSAISSSFTILEERYHNNFPNTLCVSSGQESMNNNPVPCQVFPLVSGGSSGGNLFSSSSGFCNGVYVSSSSQARPSVSTVPRDRITVAHVSGEGQRQECPVETHSLQLINQPQEQKIMTWSSDQIRGFFDFPVPDPQAASSRTMVSSKEVLSKCEWPDWADQLISDDSLEPNWSELLGDPNVLNLYSKIETQSSDIARQEIVFRNQHQVDPSMEPFNAKSPPASSMTSKQRMRWTPELHEAFVEAINQLGGSERATPKAVLKLINSPGLTVYHVKSHLQKYRTARYKPELSKDTEEPLVKNLKTIEDIKSLDLKTSIEITEALRLQMKVQKQLHEQLEIQRSLQLQIEEQGRYLQMMIEKQQKMQENKKDSTSSSSMPEADPSAPSPNLSQPFLHKATNSEPSITQKLQNGSSTMDQSESTSGTSNRKRVRED</sequence>
<gene>
    <name evidence="3" type="primary">PHL13</name>
    <name evidence="4" type="ordered locus">At3g04450</name>
    <name evidence="5" type="ORF">T27C4.10</name>
</gene>
<keyword id="KW-0025">Alternative splicing</keyword>
<keyword id="KW-0175">Coiled coil</keyword>
<keyword id="KW-0238">DNA-binding</keyword>
<keyword id="KW-0539">Nucleus</keyword>
<keyword id="KW-1185">Reference proteome</keyword>
<keyword id="KW-0804">Transcription</keyword>
<keyword id="KW-0805">Transcription regulation</keyword>
<feature type="chain" id="PRO_0000436870" description="Myb family transcription factor PHL13">
    <location>
        <begin position="1"/>
        <end position="442"/>
    </location>
</feature>
<feature type="domain" description="HTH myb-type" evidence="1">
    <location>
        <begin position="235"/>
        <end position="295"/>
    </location>
</feature>
<feature type="DNA-binding region" description="H-T-H motif" evidence="1">
    <location>
        <begin position="266"/>
        <end position="291"/>
    </location>
</feature>
<feature type="region of interest" description="Coiled coil" evidence="3">
    <location>
        <begin position="329"/>
        <end position="349"/>
    </location>
</feature>
<feature type="region of interest" description="Disordered" evidence="2">
    <location>
        <begin position="370"/>
        <end position="442"/>
    </location>
</feature>
<feature type="short sequence motif" description="LHEQLE" evidence="3">
    <location>
        <begin position="342"/>
        <end position="347"/>
    </location>
</feature>
<feature type="compositionally biased region" description="Basic and acidic residues" evidence="2">
    <location>
        <begin position="370"/>
        <end position="380"/>
    </location>
</feature>
<feature type="compositionally biased region" description="Polar residues" evidence="2">
    <location>
        <begin position="395"/>
        <end position="434"/>
    </location>
</feature>
<feature type="splice variant" id="VSP_058440" description="In isoform 2.">
    <location>
        <begin position="1"/>
        <end position="40"/>
    </location>
</feature>
<organism evidence="6">
    <name type="scientific">Arabidopsis thaliana</name>
    <name type="common">Mouse-ear cress</name>
    <dbReference type="NCBI Taxonomy" id="3702"/>
    <lineage>
        <taxon>Eukaryota</taxon>
        <taxon>Viridiplantae</taxon>
        <taxon>Streptophyta</taxon>
        <taxon>Embryophyta</taxon>
        <taxon>Tracheophyta</taxon>
        <taxon>Spermatophyta</taxon>
        <taxon>Magnoliopsida</taxon>
        <taxon>eudicotyledons</taxon>
        <taxon>Gunneridae</taxon>
        <taxon>Pentapetalae</taxon>
        <taxon>rosids</taxon>
        <taxon>malvids</taxon>
        <taxon>Brassicales</taxon>
        <taxon>Brassicaceae</taxon>
        <taxon>Camelineae</taxon>
        <taxon>Arabidopsis</taxon>
    </lineage>
</organism>
<proteinExistence type="evidence at transcript level"/>